<evidence type="ECO:0000250" key="1"/>
<evidence type="ECO:0000255" key="2">
    <source>
        <dbReference type="HAMAP-Rule" id="MF_00118"/>
    </source>
</evidence>
<name>EFTU_UREP2</name>
<accession>B1AJG3</accession>
<sequence>MAKAKFERTKPHVNIGTIGHVDHGKTTLTAAISTVLAKKGQAIAQSYADVDKTPEERERGITINASHVEYETKTRHYAHVDCPGHADYVKNMITGAAQMDGAILVIAASDGVMAQTKEHILLARQVGVPKIVVFLNKCDFMTDPDMQDLVEMEVRELLSKYGFDGDNTPVIRGSGLKALEGDPVWEAKIDELMDAVDSWIPLPERSTDKPFLLAIEDVFTISGRGTVVTGRVERGVLKVNDEVEIVGLKDTQKTVVTGIEMFRKSLDQAEAGDNAGILLRGIKKEDVERGQVLVKPGSIKPHRTFTAKVYILKKEEGGRHTPIVSGYRPQFYFRTTDVTGAISLPAGVDLVMPGDDVEMTVELIAPVAIEDGSKFSIREGGKTVGHGSVIKTSN</sequence>
<feature type="chain" id="PRO_1000076117" description="Elongation factor Tu">
    <location>
        <begin position="1"/>
        <end position="394"/>
    </location>
</feature>
<feature type="domain" description="tr-type G">
    <location>
        <begin position="10"/>
        <end position="204"/>
    </location>
</feature>
<feature type="region of interest" description="G1" evidence="1">
    <location>
        <begin position="19"/>
        <end position="26"/>
    </location>
</feature>
<feature type="region of interest" description="G2" evidence="1">
    <location>
        <begin position="60"/>
        <end position="64"/>
    </location>
</feature>
<feature type="region of interest" description="G3" evidence="1">
    <location>
        <begin position="81"/>
        <end position="84"/>
    </location>
</feature>
<feature type="region of interest" description="G4" evidence="1">
    <location>
        <begin position="136"/>
        <end position="139"/>
    </location>
</feature>
<feature type="region of interest" description="G5" evidence="1">
    <location>
        <begin position="174"/>
        <end position="176"/>
    </location>
</feature>
<feature type="binding site" evidence="2">
    <location>
        <begin position="19"/>
        <end position="26"/>
    </location>
    <ligand>
        <name>GTP</name>
        <dbReference type="ChEBI" id="CHEBI:37565"/>
    </ligand>
</feature>
<feature type="binding site" evidence="2">
    <location>
        <position position="26"/>
    </location>
    <ligand>
        <name>Mg(2+)</name>
        <dbReference type="ChEBI" id="CHEBI:18420"/>
    </ligand>
</feature>
<feature type="binding site" evidence="2">
    <location>
        <begin position="81"/>
        <end position="85"/>
    </location>
    <ligand>
        <name>GTP</name>
        <dbReference type="ChEBI" id="CHEBI:37565"/>
    </ligand>
</feature>
<feature type="binding site" evidence="2">
    <location>
        <begin position="136"/>
        <end position="139"/>
    </location>
    <ligand>
        <name>GTP</name>
        <dbReference type="ChEBI" id="CHEBI:37565"/>
    </ligand>
</feature>
<dbReference type="EC" id="3.6.5.3" evidence="2"/>
<dbReference type="EMBL" id="CP000942">
    <property type="protein sequence ID" value="ACA32727.1"/>
    <property type="molecule type" value="Genomic_DNA"/>
</dbReference>
<dbReference type="RefSeq" id="WP_006688507.1">
    <property type="nucleotide sequence ID" value="NC_010503.1"/>
</dbReference>
<dbReference type="SMR" id="B1AJG3"/>
<dbReference type="GeneID" id="29672348"/>
<dbReference type="KEGG" id="upa:UPA3_0559"/>
<dbReference type="HOGENOM" id="CLU_007265_0_1_14"/>
<dbReference type="Proteomes" id="UP000002162">
    <property type="component" value="Chromosome"/>
</dbReference>
<dbReference type="GO" id="GO:0005829">
    <property type="term" value="C:cytosol"/>
    <property type="evidence" value="ECO:0007669"/>
    <property type="project" value="TreeGrafter"/>
</dbReference>
<dbReference type="GO" id="GO:0005525">
    <property type="term" value="F:GTP binding"/>
    <property type="evidence" value="ECO:0007669"/>
    <property type="project" value="UniProtKB-UniRule"/>
</dbReference>
<dbReference type="GO" id="GO:0003924">
    <property type="term" value="F:GTPase activity"/>
    <property type="evidence" value="ECO:0007669"/>
    <property type="project" value="InterPro"/>
</dbReference>
<dbReference type="GO" id="GO:0003746">
    <property type="term" value="F:translation elongation factor activity"/>
    <property type="evidence" value="ECO:0007669"/>
    <property type="project" value="UniProtKB-UniRule"/>
</dbReference>
<dbReference type="CDD" id="cd01884">
    <property type="entry name" value="EF_Tu"/>
    <property type="match status" value="1"/>
</dbReference>
<dbReference type="CDD" id="cd03697">
    <property type="entry name" value="EFTU_II"/>
    <property type="match status" value="1"/>
</dbReference>
<dbReference type="CDD" id="cd03707">
    <property type="entry name" value="EFTU_III"/>
    <property type="match status" value="1"/>
</dbReference>
<dbReference type="FunFam" id="2.40.30.10:FF:000001">
    <property type="entry name" value="Elongation factor Tu"/>
    <property type="match status" value="1"/>
</dbReference>
<dbReference type="FunFam" id="3.40.50.300:FF:000003">
    <property type="entry name" value="Elongation factor Tu"/>
    <property type="match status" value="1"/>
</dbReference>
<dbReference type="Gene3D" id="3.40.50.300">
    <property type="entry name" value="P-loop containing nucleotide triphosphate hydrolases"/>
    <property type="match status" value="1"/>
</dbReference>
<dbReference type="Gene3D" id="2.40.30.10">
    <property type="entry name" value="Translation factors"/>
    <property type="match status" value="2"/>
</dbReference>
<dbReference type="HAMAP" id="MF_00118_B">
    <property type="entry name" value="EF_Tu_B"/>
    <property type="match status" value="1"/>
</dbReference>
<dbReference type="InterPro" id="IPR041709">
    <property type="entry name" value="EF-Tu_GTP-bd"/>
</dbReference>
<dbReference type="InterPro" id="IPR050055">
    <property type="entry name" value="EF-Tu_GTPase"/>
</dbReference>
<dbReference type="InterPro" id="IPR004161">
    <property type="entry name" value="EFTu-like_2"/>
</dbReference>
<dbReference type="InterPro" id="IPR033720">
    <property type="entry name" value="EFTU_2"/>
</dbReference>
<dbReference type="InterPro" id="IPR031157">
    <property type="entry name" value="G_TR_CS"/>
</dbReference>
<dbReference type="InterPro" id="IPR027417">
    <property type="entry name" value="P-loop_NTPase"/>
</dbReference>
<dbReference type="InterPro" id="IPR005225">
    <property type="entry name" value="Small_GTP-bd"/>
</dbReference>
<dbReference type="InterPro" id="IPR000795">
    <property type="entry name" value="T_Tr_GTP-bd_dom"/>
</dbReference>
<dbReference type="InterPro" id="IPR009000">
    <property type="entry name" value="Transl_B-barrel_sf"/>
</dbReference>
<dbReference type="InterPro" id="IPR009001">
    <property type="entry name" value="Transl_elong_EF1A/Init_IF2_C"/>
</dbReference>
<dbReference type="InterPro" id="IPR004541">
    <property type="entry name" value="Transl_elong_EFTu/EF1A_bac/org"/>
</dbReference>
<dbReference type="InterPro" id="IPR004160">
    <property type="entry name" value="Transl_elong_EFTu/EF1A_C"/>
</dbReference>
<dbReference type="NCBIfam" id="TIGR00485">
    <property type="entry name" value="EF-Tu"/>
    <property type="match status" value="1"/>
</dbReference>
<dbReference type="NCBIfam" id="NF000766">
    <property type="entry name" value="PRK00049.1"/>
    <property type="match status" value="1"/>
</dbReference>
<dbReference type="NCBIfam" id="NF009372">
    <property type="entry name" value="PRK12735.1"/>
    <property type="match status" value="1"/>
</dbReference>
<dbReference type="NCBIfam" id="NF009373">
    <property type="entry name" value="PRK12736.1"/>
    <property type="match status" value="1"/>
</dbReference>
<dbReference type="NCBIfam" id="TIGR00231">
    <property type="entry name" value="small_GTP"/>
    <property type="match status" value="1"/>
</dbReference>
<dbReference type="PANTHER" id="PTHR43721:SF22">
    <property type="entry name" value="ELONGATION FACTOR TU, MITOCHONDRIAL"/>
    <property type="match status" value="1"/>
</dbReference>
<dbReference type="PANTHER" id="PTHR43721">
    <property type="entry name" value="ELONGATION FACTOR TU-RELATED"/>
    <property type="match status" value="1"/>
</dbReference>
<dbReference type="Pfam" id="PF00009">
    <property type="entry name" value="GTP_EFTU"/>
    <property type="match status" value="1"/>
</dbReference>
<dbReference type="Pfam" id="PF03144">
    <property type="entry name" value="GTP_EFTU_D2"/>
    <property type="match status" value="1"/>
</dbReference>
<dbReference type="Pfam" id="PF03143">
    <property type="entry name" value="GTP_EFTU_D3"/>
    <property type="match status" value="1"/>
</dbReference>
<dbReference type="PRINTS" id="PR00315">
    <property type="entry name" value="ELONGATNFCT"/>
</dbReference>
<dbReference type="SUPFAM" id="SSF50465">
    <property type="entry name" value="EF-Tu/eEF-1alpha/eIF2-gamma C-terminal domain"/>
    <property type="match status" value="1"/>
</dbReference>
<dbReference type="SUPFAM" id="SSF52540">
    <property type="entry name" value="P-loop containing nucleoside triphosphate hydrolases"/>
    <property type="match status" value="1"/>
</dbReference>
<dbReference type="SUPFAM" id="SSF50447">
    <property type="entry name" value="Translation proteins"/>
    <property type="match status" value="1"/>
</dbReference>
<dbReference type="PROSITE" id="PS00301">
    <property type="entry name" value="G_TR_1"/>
    <property type="match status" value="1"/>
</dbReference>
<dbReference type="PROSITE" id="PS51722">
    <property type="entry name" value="G_TR_2"/>
    <property type="match status" value="1"/>
</dbReference>
<protein>
    <recommendedName>
        <fullName evidence="2">Elongation factor Tu</fullName>
        <shortName evidence="2">EF-Tu</shortName>
        <ecNumber evidence="2">3.6.5.3</ecNumber>
    </recommendedName>
</protein>
<gene>
    <name evidence="2" type="primary">tuf</name>
    <name type="ordered locus">UPA3_0559</name>
</gene>
<proteinExistence type="inferred from homology"/>
<reference key="1">
    <citation type="submission" date="2008-02" db="EMBL/GenBank/DDBJ databases">
        <title>Genome sequence of Ureaplasma parvum serovar 3.</title>
        <authorList>
            <person name="Methe B.A."/>
            <person name="Glass J."/>
            <person name="Waites K."/>
            <person name="Shrivastava S."/>
        </authorList>
    </citation>
    <scope>NUCLEOTIDE SEQUENCE [LARGE SCALE GENOMIC DNA]</scope>
    <source>
        <strain>ATCC 27815 / 27 / NCTC 11736</strain>
    </source>
</reference>
<keyword id="KW-0963">Cytoplasm</keyword>
<keyword id="KW-0251">Elongation factor</keyword>
<keyword id="KW-0342">GTP-binding</keyword>
<keyword id="KW-0378">Hydrolase</keyword>
<keyword id="KW-0460">Magnesium</keyword>
<keyword id="KW-0479">Metal-binding</keyword>
<keyword id="KW-0547">Nucleotide-binding</keyword>
<keyword id="KW-0648">Protein biosynthesis</keyword>
<comment type="function">
    <text evidence="2">GTP hydrolase that promotes the GTP-dependent binding of aminoacyl-tRNA to the A-site of ribosomes during protein biosynthesis.</text>
</comment>
<comment type="catalytic activity">
    <reaction evidence="2">
        <text>GTP + H2O = GDP + phosphate + H(+)</text>
        <dbReference type="Rhea" id="RHEA:19669"/>
        <dbReference type="ChEBI" id="CHEBI:15377"/>
        <dbReference type="ChEBI" id="CHEBI:15378"/>
        <dbReference type="ChEBI" id="CHEBI:37565"/>
        <dbReference type="ChEBI" id="CHEBI:43474"/>
        <dbReference type="ChEBI" id="CHEBI:58189"/>
        <dbReference type="EC" id="3.6.5.3"/>
    </reaction>
    <physiologicalReaction direction="left-to-right" evidence="2">
        <dbReference type="Rhea" id="RHEA:19670"/>
    </physiologicalReaction>
</comment>
<comment type="subunit">
    <text evidence="2">Monomer.</text>
</comment>
<comment type="subcellular location">
    <subcellularLocation>
        <location evidence="2">Cytoplasm</location>
    </subcellularLocation>
</comment>
<comment type="similarity">
    <text evidence="2">Belongs to the TRAFAC class translation factor GTPase superfamily. Classic translation factor GTPase family. EF-Tu/EF-1A subfamily.</text>
</comment>
<organism>
    <name type="scientific">Ureaplasma parvum serovar 3 (strain ATCC 27815 / 27 / NCTC 11736)</name>
    <dbReference type="NCBI Taxonomy" id="505682"/>
    <lineage>
        <taxon>Bacteria</taxon>
        <taxon>Bacillati</taxon>
        <taxon>Mycoplasmatota</taxon>
        <taxon>Mycoplasmoidales</taxon>
        <taxon>Mycoplasmoidaceae</taxon>
        <taxon>Ureaplasma</taxon>
    </lineage>
</organism>